<organism>
    <name type="scientific">Botryotinia fuckeliana (strain B05.10)</name>
    <name type="common">Noble rot fungus</name>
    <name type="synonym">Botrytis cinerea</name>
    <dbReference type="NCBI Taxonomy" id="332648"/>
    <lineage>
        <taxon>Eukaryota</taxon>
        <taxon>Fungi</taxon>
        <taxon>Dikarya</taxon>
        <taxon>Ascomycota</taxon>
        <taxon>Pezizomycotina</taxon>
        <taxon>Leotiomycetes</taxon>
        <taxon>Helotiales</taxon>
        <taxon>Sclerotiniaceae</taxon>
        <taxon>Botrytis</taxon>
    </lineage>
</organism>
<evidence type="ECO:0000250" key="1">
    <source>
        <dbReference type="UniProtKB" id="G2R6N0"/>
    </source>
</evidence>
<evidence type="ECO:0000250" key="2">
    <source>
        <dbReference type="UniProtKB" id="Q1K4Q1"/>
    </source>
</evidence>
<evidence type="ECO:0000250" key="3">
    <source>
        <dbReference type="UniProtKB" id="Q1K8B6"/>
    </source>
</evidence>
<evidence type="ECO:0000250" key="4">
    <source>
        <dbReference type="UniProtKB" id="Q4WP32"/>
    </source>
</evidence>
<evidence type="ECO:0000250" key="5">
    <source>
        <dbReference type="UniProtKB" id="Q7Z9M7"/>
    </source>
</evidence>
<evidence type="ECO:0000255" key="6"/>
<evidence type="ECO:0000255" key="7">
    <source>
        <dbReference type="PROSITE-ProRule" id="PRU00498"/>
    </source>
</evidence>
<evidence type="ECO:0000255" key="8">
    <source>
        <dbReference type="PROSITE-ProRule" id="PRU00597"/>
    </source>
</evidence>
<evidence type="ECO:0000269" key="9">
    <source>
    </source>
</evidence>
<evidence type="ECO:0000303" key="10">
    <source>
    </source>
</evidence>
<evidence type="ECO:0000305" key="11"/>
<evidence type="ECO:0000305" key="12">
    <source>
    </source>
</evidence>
<dbReference type="EC" id="1.14.99.56" evidence="9"/>
<dbReference type="EMBL" id="CP009810">
    <property type="protein sequence ID" value="ATZ50551.1"/>
    <property type="molecule type" value="Genomic_DNA"/>
</dbReference>
<dbReference type="SMR" id="A0A384JJB6"/>
<dbReference type="EnsemblFungi" id="Bcin06g00480.1">
    <property type="protein sequence ID" value="Bcin06p00480.1"/>
    <property type="gene ID" value="Bcin06g00480"/>
</dbReference>
<dbReference type="VEuPathDB" id="FungiDB:Bcin06g00480"/>
<dbReference type="OrthoDB" id="5558646at2759"/>
<dbReference type="Proteomes" id="UP000001798">
    <property type="component" value="Chromosome bcin06"/>
</dbReference>
<dbReference type="GO" id="GO:0005576">
    <property type="term" value="C:extracellular region"/>
    <property type="evidence" value="ECO:0007669"/>
    <property type="project" value="UniProtKB-SubCell"/>
</dbReference>
<dbReference type="GO" id="GO:0030248">
    <property type="term" value="F:cellulose binding"/>
    <property type="evidence" value="ECO:0007669"/>
    <property type="project" value="InterPro"/>
</dbReference>
<dbReference type="GO" id="GO:0046872">
    <property type="term" value="F:metal ion binding"/>
    <property type="evidence" value="ECO:0007669"/>
    <property type="project" value="UniProtKB-KW"/>
</dbReference>
<dbReference type="GO" id="GO:0004497">
    <property type="term" value="F:monooxygenase activity"/>
    <property type="evidence" value="ECO:0007669"/>
    <property type="project" value="UniProtKB-KW"/>
</dbReference>
<dbReference type="GO" id="GO:0030245">
    <property type="term" value="P:cellulose catabolic process"/>
    <property type="evidence" value="ECO:0007669"/>
    <property type="project" value="UniProtKB-KW"/>
</dbReference>
<dbReference type="CDD" id="cd21175">
    <property type="entry name" value="LPMO_AA9"/>
    <property type="match status" value="1"/>
</dbReference>
<dbReference type="Gene3D" id="2.70.50.70">
    <property type="match status" value="1"/>
</dbReference>
<dbReference type="InterPro" id="IPR049892">
    <property type="entry name" value="AA9"/>
</dbReference>
<dbReference type="InterPro" id="IPR005103">
    <property type="entry name" value="AA9_LPMO"/>
</dbReference>
<dbReference type="InterPro" id="IPR035971">
    <property type="entry name" value="CBD_sf"/>
</dbReference>
<dbReference type="InterPro" id="IPR000254">
    <property type="entry name" value="Cellulose-bd_dom_fun"/>
</dbReference>
<dbReference type="PANTHER" id="PTHR33353:SF18">
    <property type="entry name" value="ENDOGLUCANASE II"/>
    <property type="match status" value="1"/>
</dbReference>
<dbReference type="PANTHER" id="PTHR33353">
    <property type="entry name" value="PUTATIVE (AFU_ORTHOLOGUE AFUA_1G12560)-RELATED"/>
    <property type="match status" value="1"/>
</dbReference>
<dbReference type="Pfam" id="PF03443">
    <property type="entry name" value="AA9"/>
    <property type="match status" value="1"/>
</dbReference>
<dbReference type="Pfam" id="PF00734">
    <property type="entry name" value="CBM_1"/>
    <property type="match status" value="1"/>
</dbReference>
<dbReference type="SMART" id="SM00236">
    <property type="entry name" value="fCBD"/>
    <property type="match status" value="1"/>
</dbReference>
<dbReference type="SUPFAM" id="SSF57180">
    <property type="entry name" value="Cellulose-binding domain"/>
    <property type="match status" value="1"/>
</dbReference>
<dbReference type="PROSITE" id="PS00562">
    <property type="entry name" value="CBM1_1"/>
    <property type="match status" value="1"/>
</dbReference>
<dbReference type="PROSITE" id="PS51164">
    <property type="entry name" value="CBM1_2"/>
    <property type="match status" value="1"/>
</dbReference>
<sequence length="321" mass="33091">MKLQLIIPFSFLISYVSAHTIFMKLQSGGTLYNTSYAIRTPTYDGPINDVTTEYVACNGGPNPTTPSSNIINVVAGSTVNAIWRHTLDSTPANDATYVLDPSHLGPVMAYMKKVTDATTDVGYGPGWFKISEQGLNVATQGWATTDLINNAGVQSITIPSCIANGQYLLRAELIALHSAGGSQGAQLYMECAQINVSGGTGTSTPSTVSFPGAYGQSDPGILINIYQTLTTYTIPGPTPFVCGAAQSTAKSSSTSTAKPTSTSTLSTSTVTKTSSSAVASGTGTAAIYAQCGGQGWTGATVCASGSKCVVSSAFYSQCLPS</sequence>
<keyword id="KW-0119">Carbohydrate metabolism</keyword>
<keyword id="KW-0136">Cellulose degradation</keyword>
<keyword id="KW-0186">Copper</keyword>
<keyword id="KW-1015">Disulfide bond</keyword>
<keyword id="KW-0325">Glycoprotein</keyword>
<keyword id="KW-0479">Metal-binding</keyword>
<keyword id="KW-0503">Monooxygenase</keyword>
<keyword id="KW-0560">Oxidoreductase</keyword>
<keyword id="KW-0624">Polysaccharide degradation</keyword>
<keyword id="KW-1185">Reference proteome</keyword>
<keyword id="KW-0964">Secreted</keyword>
<keyword id="KW-0732">Signal</keyword>
<comment type="function">
    <text evidence="9 12">Major lytic polysaccharide monooxygenase (LPMO) that depolymerizes crystalline and amorphous polysaccharides via the oxidation of scissile alpha- or beta-(1-4)-glycosidic bonds, yielding C1 and C4 oxidation products (PubMed:35080440). Catalysis by LPMOs requires the reduction of the active-site copper from Cu(II) to Cu(I) by a reducing agent and H(2)O(2) or O(2) as a cosubstrate (Probable).</text>
</comment>
<comment type="catalytic activity">
    <reaction evidence="9">
        <text>[(1-&gt;4)-beta-D-glucosyl]n+m + reduced acceptor + O2 = 4-dehydro-beta-D-glucosyl-[(1-&gt;4)-beta-D-glucosyl]n-1 + [(1-&gt;4)-beta-D-glucosyl]m + acceptor + H2O.</text>
        <dbReference type="EC" id="1.14.99.56"/>
    </reaction>
</comment>
<comment type="cofactor">
    <cofactor evidence="9">
        <name>Cu(2+)</name>
        <dbReference type="ChEBI" id="CHEBI:29036"/>
    </cofactor>
    <text evidence="12">Binds 1 copper ion per subunit.</text>
</comment>
<comment type="subcellular location">
    <subcellularLocation>
        <location evidence="12">Secreted</location>
    </subcellularLocation>
</comment>
<comment type="induction">
    <text evidence="9">Expression is increased 30-fold in cellulose-inducible conditions (in Avicel- and wheat bran-containing complex medium).</text>
</comment>
<comment type="domain">
    <text evidence="9">Has a modular structure: an endo-beta-1,4-glucanase catalytic module at the N-terminus, a linker rich in serines and threonines, and a C-terminal carbohydrate-binding module (CBM). Both linker and CBM domains are essential for binding to and subsequent oxidative degradation of polysaccharide substrate.</text>
</comment>
<comment type="biotechnology">
    <text evidence="9">Lignocellulose is the most abundant polymeric composite on Earth and is a recalcitrant but promising renewable substrate for industrial biotechnology applications. Together with cellobiose dehydrogenases (CDHs) an enzymatic system capable of oxidative cellulose cleavage is formed, which increases the efficiency of cellulases and put LPMOs at focus of biofuel research.</text>
</comment>
<comment type="similarity">
    <text evidence="11">Belongs to the polysaccharide monooxygenase AA9 family.</text>
</comment>
<reference key="1">
    <citation type="journal article" date="2011" name="PLoS Genet.">
        <title>Genomic analysis of the necrotrophic fungal pathogens Sclerotinia sclerotiorum and Botrytis cinerea.</title>
        <authorList>
            <person name="Amselem J."/>
            <person name="Cuomo C.A."/>
            <person name="van Kan J.A.L."/>
            <person name="Viaud M."/>
            <person name="Benito E.P."/>
            <person name="Couloux A."/>
            <person name="Coutinho P.M."/>
            <person name="de Vries R.P."/>
            <person name="Dyer P.S."/>
            <person name="Fillinger S."/>
            <person name="Fournier E."/>
            <person name="Gout L."/>
            <person name="Hahn M."/>
            <person name="Kohn L."/>
            <person name="Lapalu N."/>
            <person name="Plummer K.M."/>
            <person name="Pradier J.-M."/>
            <person name="Quevillon E."/>
            <person name="Sharon A."/>
            <person name="Simon A."/>
            <person name="ten Have A."/>
            <person name="Tudzynski B."/>
            <person name="Tudzynski P."/>
            <person name="Wincker P."/>
            <person name="Andrew M."/>
            <person name="Anthouard V."/>
            <person name="Beever R.E."/>
            <person name="Beffa R."/>
            <person name="Benoit I."/>
            <person name="Bouzid O."/>
            <person name="Brault B."/>
            <person name="Chen Z."/>
            <person name="Choquer M."/>
            <person name="Collemare J."/>
            <person name="Cotton P."/>
            <person name="Danchin E.G."/>
            <person name="Da Silva C."/>
            <person name="Gautier A."/>
            <person name="Giraud C."/>
            <person name="Giraud T."/>
            <person name="Gonzalez C."/>
            <person name="Grossetete S."/>
            <person name="Gueldener U."/>
            <person name="Henrissat B."/>
            <person name="Howlett B.J."/>
            <person name="Kodira C."/>
            <person name="Kretschmer M."/>
            <person name="Lappartient A."/>
            <person name="Leroch M."/>
            <person name="Levis C."/>
            <person name="Mauceli E."/>
            <person name="Neuveglise C."/>
            <person name="Oeser B."/>
            <person name="Pearson M."/>
            <person name="Poulain J."/>
            <person name="Poussereau N."/>
            <person name="Quesneville H."/>
            <person name="Rascle C."/>
            <person name="Schumacher J."/>
            <person name="Segurens B."/>
            <person name="Sexton A."/>
            <person name="Silva E."/>
            <person name="Sirven C."/>
            <person name="Soanes D.M."/>
            <person name="Talbot N.J."/>
            <person name="Templeton M."/>
            <person name="Yandava C."/>
            <person name="Yarden O."/>
            <person name="Zeng Q."/>
            <person name="Rollins J.A."/>
            <person name="Lebrun M.-H."/>
            <person name="Dickman M."/>
        </authorList>
    </citation>
    <scope>NUCLEOTIDE SEQUENCE [LARGE SCALE GENOMIC DNA]</scope>
    <source>
        <strain>B05.10</strain>
    </source>
</reference>
<reference key="2">
    <citation type="journal article" date="2012" name="Eukaryot. Cell">
        <title>Genome update of Botrytis cinerea strains B05.10 and T4.</title>
        <authorList>
            <person name="Staats M."/>
            <person name="van Kan J.A.L."/>
        </authorList>
    </citation>
    <scope>NUCLEOTIDE SEQUENCE [LARGE SCALE GENOMIC DNA]</scope>
    <source>
        <strain>B05.10</strain>
    </source>
</reference>
<reference key="3">
    <citation type="journal article" date="2017" name="Mol. Plant Pathol.">
        <title>A gapless genome sequence of the fungus Botrytis cinerea.</title>
        <authorList>
            <person name="van Kan J.A.L."/>
            <person name="Stassen J.H.M."/>
            <person name="Mosbach A."/>
            <person name="van der Lee T.A.J."/>
            <person name="Faino L."/>
            <person name="Farmer A.D."/>
            <person name="Papasotiriou D.G."/>
            <person name="Zhou S."/>
            <person name="Seidl M.F."/>
            <person name="Cottam E."/>
            <person name="Edel D."/>
            <person name="Hahn M."/>
            <person name="Schwartz D.C."/>
            <person name="Dietrich R.A."/>
            <person name="Widdison S."/>
            <person name="Scalliet G."/>
        </authorList>
    </citation>
    <scope>NUCLEOTIDE SEQUENCE [LARGE SCALE GENOMIC DNA]</scope>
    <source>
        <strain>B05.10</strain>
    </source>
</reference>
<reference key="4">
    <citation type="journal article" date="2022" name="Microbiol. Spectr.">
        <title>The Linker Region Promotes Activity and Binding Efficiency of Modular LPMO towards Polymeric Substrate.</title>
        <authorList>
            <person name="Srivastava A."/>
            <person name="Nagar P."/>
            <person name="Rathore S."/>
            <person name="Adlakha N."/>
        </authorList>
    </citation>
    <scope>IDENTIFICATION</scope>
    <scope>INDUCTION</scope>
    <scope>FUNCTION</scope>
    <scope>CATALYTIC ACTIVITY</scope>
    <scope>COFACTOR</scope>
    <scope>DOMAIN</scope>
    <scope>BIOTECHNOLOGY</scope>
</reference>
<gene>
    <name evidence="10" type="primary">AA9C</name>
    <name type="ORF">BCIN_06g00480</name>
</gene>
<proteinExistence type="evidence at protein level"/>
<protein>
    <recommendedName>
        <fullName evidence="10">AA9 family lytic polysaccharide monooxygenase C</fullName>
        <shortName evidence="10">AA9C</shortName>
        <ecNumber evidence="9">1.14.99.56</ecNumber>
    </recommendedName>
    <alternativeName>
        <fullName evidence="11">Endo-1,4-beta-glucanase AA9C</fullName>
        <shortName evidence="11">Endoglucanase AA9C</shortName>
    </alternativeName>
    <alternativeName>
        <fullName evidence="11">Glycosyl hydrolase 61 family protein AA9C</fullName>
    </alternativeName>
</protein>
<accession>A0A384JJB6</accession>
<name>LP9C_BOTFB</name>
<feature type="signal peptide" evidence="6">
    <location>
        <begin position="1"/>
        <end position="18"/>
    </location>
</feature>
<feature type="chain" id="PRO_5016657552" description="AA9 family lytic polysaccharide monooxygenase C" evidence="6">
    <location>
        <begin position="19"/>
        <end position="321"/>
    </location>
</feature>
<feature type="domain" description="CBM1" evidence="8">
    <location>
        <begin position="283"/>
        <end position="319"/>
    </location>
</feature>
<feature type="binding site" evidence="1">
    <location>
        <position position="19"/>
    </location>
    <ligand>
        <name>Cu(2+)</name>
        <dbReference type="ChEBI" id="CHEBI:29036"/>
    </ligand>
</feature>
<feature type="binding site" evidence="4">
    <location>
        <position position="103"/>
    </location>
    <ligand>
        <name>Cu(2+)</name>
        <dbReference type="ChEBI" id="CHEBI:29036"/>
    </ligand>
</feature>
<feature type="binding site" evidence="3">
    <location>
        <position position="177"/>
    </location>
    <ligand>
        <name>O2</name>
        <dbReference type="ChEBI" id="CHEBI:15379"/>
    </ligand>
</feature>
<feature type="binding site" evidence="3">
    <location>
        <position position="186"/>
    </location>
    <ligand>
        <name>O2</name>
        <dbReference type="ChEBI" id="CHEBI:15379"/>
    </ligand>
</feature>
<feature type="binding site" evidence="1">
    <location>
        <position position="188"/>
    </location>
    <ligand>
        <name>Cu(2+)</name>
        <dbReference type="ChEBI" id="CHEBI:29036"/>
    </ligand>
</feature>
<feature type="glycosylation site" description="N-linked (GlcNAc...) asparagine" evidence="7">
    <location>
        <position position="33"/>
    </location>
</feature>
<feature type="glycosylation site" description="N-linked (GlcNAc...) asparagine" evidence="7">
    <location>
        <position position="195"/>
    </location>
</feature>
<feature type="disulfide bond" evidence="5">
    <location>
        <begin position="57"/>
        <end position="191"/>
    </location>
</feature>
<feature type="disulfide bond" evidence="2">
    <location>
        <begin position="161"/>
        <end position="242"/>
    </location>
</feature>